<accession>Q7VKD8</accession>
<evidence type="ECO:0000255" key="1">
    <source>
        <dbReference type="HAMAP-Rule" id="MF_01342"/>
    </source>
</evidence>
<evidence type="ECO:0000305" key="2"/>
<name>RL16_HAEDU</name>
<reference key="1">
    <citation type="submission" date="2003-06" db="EMBL/GenBank/DDBJ databases">
        <title>The complete genome sequence of Haemophilus ducreyi.</title>
        <authorList>
            <person name="Munson R.S. Jr."/>
            <person name="Ray W.C."/>
            <person name="Mahairas G."/>
            <person name="Sabo P."/>
            <person name="Mungur R."/>
            <person name="Johnson L."/>
            <person name="Nguyen D."/>
            <person name="Wang J."/>
            <person name="Forst C."/>
            <person name="Hood L."/>
        </authorList>
    </citation>
    <scope>NUCLEOTIDE SEQUENCE [LARGE SCALE GENOMIC DNA]</scope>
    <source>
        <strain>35000HP / ATCC 700724</strain>
    </source>
</reference>
<organism>
    <name type="scientific">Haemophilus ducreyi (strain 35000HP / ATCC 700724)</name>
    <dbReference type="NCBI Taxonomy" id="233412"/>
    <lineage>
        <taxon>Bacteria</taxon>
        <taxon>Pseudomonadati</taxon>
        <taxon>Pseudomonadota</taxon>
        <taxon>Gammaproteobacteria</taxon>
        <taxon>Pasteurellales</taxon>
        <taxon>Pasteurellaceae</taxon>
        <taxon>Haemophilus</taxon>
    </lineage>
</organism>
<protein>
    <recommendedName>
        <fullName evidence="1">Large ribosomal subunit protein uL16</fullName>
    </recommendedName>
    <alternativeName>
        <fullName evidence="2">50S ribosomal protein L16</fullName>
    </alternativeName>
</protein>
<keyword id="KW-1185">Reference proteome</keyword>
<keyword id="KW-0687">Ribonucleoprotein</keyword>
<keyword id="KW-0689">Ribosomal protein</keyword>
<keyword id="KW-0694">RNA-binding</keyword>
<keyword id="KW-0699">rRNA-binding</keyword>
<keyword id="KW-0820">tRNA-binding</keyword>
<dbReference type="EMBL" id="AE017143">
    <property type="protein sequence ID" value="AAP96693.1"/>
    <property type="molecule type" value="Genomic_DNA"/>
</dbReference>
<dbReference type="RefSeq" id="WP_010945715.1">
    <property type="nucleotide sequence ID" value="NC_002940.2"/>
</dbReference>
<dbReference type="SMR" id="Q7VKD8"/>
<dbReference type="STRING" id="233412.HD_1976"/>
<dbReference type="KEGG" id="hdu:HD_1976"/>
<dbReference type="eggNOG" id="COG0197">
    <property type="taxonomic scope" value="Bacteria"/>
</dbReference>
<dbReference type="HOGENOM" id="CLU_078858_2_1_6"/>
<dbReference type="OrthoDB" id="9802589at2"/>
<dbReference type="Proteomes" id="UP000001022">
    <property type="component" value="Chromosome"/>
</dbReference>
<dbReference type="GO" id="GO:0022625">
    <property type="term" value="C:cytosolic large ribosomal subunit"/>
    <property type="evidence" value="ECO:0007669"/>
    <property type="project" value="TreeGrafter"/>
</dbReference>
<dbReference type="GO" id="GO:0019843">
    <property type="term" value="F:rRNA binding"/>
    <property type="evidence" value="ECO:0007669"/>
    <property type="project" value="UniProtKB-UniRule"/>
</dbReference>
<dbReference type="GO" id="GO:0003735">
    <property type="term" value="F:structural constituent of ribosome"/>
    <property type="evidence" value="ECO:0007669"/>
    <property type="project" value="InterPro"/>
</dbReference>
<dbReference type="GO" id="GO:0000049">
    <property type="term" value="F:tRNA binding"/>
    <property type="evidence" value="ECO:0007669"/>
    <property type="project" value="UniProtKB-KW"/>
</dbReference>
<dbReference type="GO" id="GO:0006412">
    <property type="term" value="P:translation"/>
    <property type="evidence" value="ECO:0007669"/>
    <property type="project" value="UniProtKB-UniRule"/>
</dbReference>
<dbReference type="CDD" id="cd01433">
    <property type="entry name" value="Ribosomal_L16_L10e"/>
    <property type="match status" value="1"/>
</dbReference>
<dbReference type="FunFam" id="3.90.1170.10:FF:000001">
    <property type="entry name" value="50S ribosomal protein L16"/>
    <property type="match status" value="1"/>
</dbReference>
<dbReference type="Gene3D" id="3.90.1170.10">
    <property type="entry name" value="Ribosomal protein L10e/L16"/>
    <property type="match status" value="1"/>
</dbReference>
<dbReference type="HAMAP" id="MF_01342">
    <property type="entry name" value="Ribosomal_uL16"/>
    <property type="match status" value="1"/>
</dbReference>
<dbReference type="InterPro" id="IPR047873">
    <property type="entry name" value="Ribosomal_uL16"/>
</dbReference>
<dbReference type="InterPro" id="IPR000114">
    <property type="entry name" value="Ribosomal_uL16_bact-type"/>
</dbReference>
<dbReference type="InterPro" id="IPR020798">
    <property type="entry name" value="Ribosomal_uL16_CS"/>
</dbReference>
<dbReference type="InterPro" id="IPR016180">
    <property type="entry name" value="Ribosomal_uL16_dom"/>
</dbReference>
<dbReference type="InterPro" id="IPR036920">
    <property type="entry name" value="Ribosomal_uL16_sf"/>
</dbReference>
<dbReference type="NCBIfam" id="TIGR01164">
    <property type="entry name" value="rplP_bact"/>
    <property type="match status" value="1"/>
</dbReference>
<dbReference type="PANTHER" id="PTHR12220">
    <property type="entry name" value="50S/60S RIBOSOMAL PROTEIN L16"/>
    <property type="match status" value="1"/>
</dbReference>
<dbReference type="PANTHER" id="PTHR12220:SF13">
    <property type="entry name" value="LARGE RIBOSOMAL SUBUNIT PROTEIN UL16M"/>
    <property type="match status" value="1"/>
</dbReference>
<dbReference type="Pfam" id="PF00252">
    <property type="entry name" value="Ribosomal_L16"/>
    <property type="match status" value="1"/>
</dbReference>
<dbReference type="PRINTS" id="PR00060">
    <property type="entry name" value="RIBOSOMALL16"/>
</dbReference>
<dbReference type="SUPFAM" id="SSF54686">
    <property type="entry name" value="Ribosomal protein L16p/L10e"/>
    <property type="match status" value="1"/>
</dbReference>
<dbReference type="PROSITE" id="PS00586">
    <property type="entry name" value="RIBOSOMAL_L16_1"/>
    <property type="match status" value="1"/>
</dbReference>
<dbReference type="PROSITE" id="PS00701">
    <property type="entry name" value="RIBOSOMAL_L16_2"/>
    <property type="match status" value="1"/>
</dbReference>
<sequence>MLQPKRTKFRKVHKGRNRGIAVGTEVSFGTFGLKAIGRGRLTARQIEAARRAMTRAVKRQGKIWIRVFPDKPITEKPLEVRMGKGKGNVEYWVALIQPGKVLYEMDGVSEEIARHAFALAAAKLPMKTTFVTKTVM</sequence>
<feature type="chain" id="PRO_0000062111" description="Large ribosomal subunit protein uL16">
    <location>
        <begin position="1"/>
        <end position="136"/>
    </location>
</feature>
<comment type="function">
    <text evidence="1">Binds 23S rRNA and is also seen to make contacts with the A and possibly P site tRNAs.</text>
</comment>
<comment type="subunit">
    <text evidence="1">Part of the 50S ribosomal subunit.</text>
</comment>
<comment type="similarity">
    <text evidence="1">Belongs to the universal ribosomal protein uL16 family.</text>
</comment>
<proteinExistence type="inferred from homology"/>
<gene>
    <name evidence="1" type="primary">rplP</name>
    <name type="ordered locus">HD_1976</name>
</gene>